<name>CYSK_HAEIN</name>
<comment type="catalytic activity">
    <reaction>
        <text>O-acetyl-L-serine + hydrogen sulfide = L-cysteine + acetate</text>
        <dbReference type="Rhea" id="RHEA:14829"/>
        <dbReference type="ChEBI" id="CHEBI:29919"/>
        <dbReference type="ChEBI" id="CHEBI:30089"/>
        <dbReference type="ChEBI" id="CHEBI:35235"/>
        <dbReference type="ChEBI" id="CHEBI:58340"/>
        <dbReference type="EC" id="2.5.1.47"/>
    </reaction>
</comment>
<comment type="cofactor">
    <cofactor evidence="1">
        <name>pyridoxal 5'-phosphate</name>
        <dbReference type="ChEBI" id="CHEBI:597326"/>
    </cofactor>
</comment>
<comment type="pathway">
    <text>Amino-acid biosynthesis; L-cysteine biosynthesis; L-cysteine from L-serine: step 2/2.</text>
</comment>
<comment type="subunit">
    <text evidence="1">Homodimer.</text>
</comment>
<comment type="similarity">
    <text evidence="3">Belongs to the cysteine synthase/cystathionine beta-synthase family.</text>
</comment>
<feature type="chain" id="PRO_0000167090" description="Cysteine synthase">
    <location>
        <begin position="1"/>
        <end position="316"/>
    </location>
</feature>
<feature type="binding site" evidence="2">
    <location>
        <position position="7"/>
    </location>
    <ligand>
        <name>hydrogen sulfide</name>
        <dbReference type="ChEBI" id="CHEBI:29919"/>
        <note>allosteric inhibitor; ligand shared between dimeric partners</note>
    </ligand>
</feature>
<feature type="binding site" description="in other chain" evidence="2">
    <location>
        <position position="35"/>
    </location>
    <ligand>
        <name>hydrogen sulfide</name>
        <dbReference type="ChEBI" id="CHEBI:29919"/>
        <note>allosteric inhibitor; ligand shared between dimeric partners</note>
    </ligand>
</feature>
<feature type="binding site" evidence="1">
    <location>
        <position position="72"/>
    </location>
    <ligand>
        <name>pyridoxal 5'-phosphate</name>
        <dbReference type="ChEBI" id="CHEBI:597326"/>
    </ligand>
</feature>
<feature type="binding site" evidence="1">
    <location>
        <begin position="177"/>
        <end position="181"/>
    </location>
    <ligand>
        <name>pyridoxal 5'-phosphate</name>
        <dbReference type="ChEBI" id="CHEBI:597326"/>
    </ligand>
</feature>
<feature type="binding site" description="in other chain" evidence="2">
    <location>
        <position position="268"/>
    </location>
    <ligand>
        <name>hydrogen sulfide</name>
        <dbReference type="ChEBI" id="CHEBI:29919"/>
        <note>allosteric inhibitor; ligand shared between dimeric partners</note>
    </ligand>
</feature>
<feature type="binding site" evidence="1">
    <location>
        <position position="272"/>
    </location>
    <ligand>
        <name>pyridoxal 5'-phosphate</name>
        <dbReference type="ChEBI" id="CHEBI:597326"/>
    </ligand>
</feature>
<feature type="modified residue" description="N6-(pyridoxal phosphate)lysine" evidence="1">
    <location>
        <position position="42"/>
    </location>
</feature>
<feature type="strand" evidence="9">
    <location>
        <begin position="3"/>
        <end position="6"/>
    </location>
</feature>
<feature type="helix" evidence="4">
    <location>
        <begin position="7"/>
        <end position="10"/>
    </location>
</feature>
<feature type="strand" evidence="4">
    <location>
        <begin position="16"/>
        <end position="18"/>
    </location>
</feature>
<feature type="strand" evidence="4">
    <location>
        <begin position="20"/>
        <end position="24"/>
    </location>
</feature>
<feature type="strand" evidence="4">
    <location>
        <begin position="28"/>
        <end position="32"/>
    </location>
</feature>
<feature type="helix" evidence="4">
    <location>
        <begin position="37"/>
        <end position="39"/>
    </location>
</feature>
<feature type="helix" evidence="4">
    <location>
        <begin position="44"/>
        <end position="55"/>
    </location>
</feature>
<feature type="strand" evidence="8">
    <location>
        <begin position="57"/>
        <end position="59"/>
    </location>
</feature>
<feature type="strand" evidence="4">
    <location>
        <begin position="64"/>
        <end position="68"/>
    </location>
</feature>
<feature type="helix" evidence="4">
    <location>
        <begin position="72"/>
        <end position="84"/>
    </location>
</feature>
<feature type="strand" evidence="4">
    <location>
        <begin position="88"/>
        <end position="93"/>
    </location>
</feature>
<feature type="strand" evidence="5">
    <location>
        <begin position="94"/>
        <end position="97"/>
    </location>
</feature>
<feature type="helix" evidence="4">
    <location>
        <begin position="98"/>
        <end position="106"/>
    </location>
</feature>
<feature type="strand" evidence="4">
    <location>
        <begin position="110"/>
        <end position="114"/>
    </location>
</feature>
<feature type="helix" evidence="4">
    <location>
        <begin position="116"/>
        <end position="118"/>
    </location>
</feature>
<feature type="helix" evidence="4">
    <location>
        <begin position="119"/>
        <end position="133"/>
    </location>
</feature>
<feature type="turn" evidence="4">
    <location>
        <begin position="135"/>
        <end position="137"/>
    </location>
</feature>
<feature type="strand" evidence="6">
    <location>
        <begin position="138"/>
        <end position="140"/>
    </location>
</feature>
<feature type="turn" evidence="4">
    <location>
        <begin position="143"/>
        <end position="145"/>
    </location>
</feature>
<feature type="helix" evidence="4">
    <location>
        <begin position="148"/>
        <end position="155"/>
    </location>
</feature>
<feature type="helix" evidence="4">
    <location>
        <begin position="157"/>
        <end position="164"/>
    </location>
</feature>
<feature type="turn" evidence="4">
    <location>
        <begin position="165"/>
        <end position="167"/>
    </location>
</feature>
<feature type="strand" evidence="4">
    <location>
        <begin position="169"/>
        <end position="175"/>
    </location>
</feature>
<feature type="strand" evidence="4">
    <location>
        <begin position="177"/>
        <end position="179"/>
    </location>
</feature>
<feature type="helix" evidence="4">
    <location>
        <begin position="180"/>
        <end position="191"/>
    </location>
</feature>
<feature type="strand" evidence="4">
    <location>
        <begin position="198"/>
        <end position="204"/>
    </location>
</feature>
<feature type="helix" evidence="4">
    <location>
        <begin position="209"/>
        <end position="215"/>
    </location>
</feature>
<feature type="helix" evidence="4">
    <location>
        <begin position="240"/>
        <end position="242"/>
    </location>
</feature>
<feature type="strand" evidence="4">
    <location>
        <begin position="245"/>
        <end position="249"/>
    </location>
</feature>
<feature type="helix" evidence="4">
    <location>
        <begin position="251"/>
        <end position="265"/>
    </location>
</feature>
<feature type="helix" evidence="4">
    <location>
        <begin position="271"/>
        <end position="284"/>
    </location>
</feature>
<feature type="helix" evidence="4">
    <location>
        <begin position="287"/>
        <end position="289"/>
    </location>
</feature>
<feature type="strand" evidence="8">
    <location>
        <begin position="290"/>
        <end position="292"/>
    </location>
</feature>
<feature type="strand" evidence="4">
    <location>
        <begin position="293"/>
        <end position="298"/>
    </location>
</feature>
<feature type="helix" evidence="7">
    <location>
        <begin position="302"/>
        <end position="305"/>
    </location>
</feature>
<feature type="turn" evidence="4">
    <location>
        <begin position="308"/>
        <end position="310"/>
    </location>
</feature>
<reference key="1">
    <citation type="journal article" date="1995" name="Science">
        <title>Whole-genome random sequencing and assembly of Haemophilus influenzae Rd.</title>
        <authorList>
            <person name="Fleischmann R.D."/>
            <person name="Adams M.D."/>
            <person name="White O."/>
            <person name="Clayton R.A."/>
            <person name="Kirkness E.F."/>
            <person name="Kerlavage A.R."/>
            <person name="Bult C.J."/>
            <person name="Tomb J.-F."/>
            <person name="Dougherty B.A."/>
            <person name="Merrick J.M."/>
            <person name="McKenney K."/>
            <person name="Sutton G.G."/>
            <person name="FitzHugh W."/>
            <person name="Fields C.A."/>
            <person name="Gocayne J.D."/>
            <person name="Scott J.D."/>
            <person name="Shirley R."/>
            <person name="Liu L.-I."/>
            <person name="Glodek A."/>
            <person name="Kelley J.M."/>
            <person name="Weidman J.F."/>
            <person name="Phillips C.A."/>
            <person name="Spriggs T."/>
            <person name="Hedblom E."/>
            <person name="Cotton M.D."/>
            <person name="Utterback T.R."/>
            <person name="Hanna M.C."/>
            <person name="Nguyen D.T."/>
            <person name="Saudek D.M."/>
            <person name="Brandon R.C."/>
            <person name="Fine L.D."/>
            <person name="Fritchman J.L."/>
            <person name="Fuhrmann J.L."/>
            <person name="Geoghagen N.S.M."/>
            <person name="Gnehm C.L."/>
            <person name="McDonald L.A."/>
            <person name="Small K.V."/>
            <person name="Fraser C.M."/>
            <person name="Smith H.O."/>
            <person name="Venter J.C."/>
        </authorList>
    </citation>
    <scope>NUCLEOTIDE SEQUENCE [LARGE SCALE GENOMIC DNA]</scope>
    <source>
        <strain>ATCC 51907 / DSM 11121 / KW20 / Rd</strain>
    </source>
</reference>
<reference key="2">
    <citation type="journal article" date="2005" name="J. Bacteriol.">
        <title>The active site of O-acetylserine sulfhydrylase is the anchor point for bienzyme complex formation with serine acetyltransferase.</title>
        <authorList>
            <person name="Huang B."/>
            <person name="Vetting M.W."/>
            <person name="Roderick S.L."/>
        </authorList>
    </citation>
    <scope>X-RAY CRYSTALLOGRAPHY (1.55 ANGSTROMS) IN COMPLEX WITH SAT</scope>
</reference>
<gene>
    <name type="primary">cysK</name>
    <name type="ordered locus">HI_1103</name>
</gene>
<accession>P45040</accession>
<keyword id="KW-0002">3D-structure</keyword>
<keyword id="KW-0021">Allosteric enzyme</keyword>
<keyword id="KW-0028">Amino-acid biosynthesis</keyword>
<keyword id="KW-0198">Cysteine biosynthesis</keyword>
<keyword id="KW-0663">Pyridoxal phosphate</keyword>
<keyword id="KW-1185">Reference proteome</keyword>
<keyword id="KW-0808">Transferase</keyword>
<evidence type="ECO:0000250" key="1"/>
<evidence type="ECO:0000250" key="2">
    <source>
        <dbReference type="UniProtKB" id="P0A1E3"/>
    </source>
</evidence>
<evidence type="ECO:0000305" key="3"/>
<evidence type="ECO:0007829" key="4">
    <source>
        <dbReference type="PDB" id="1Y7L"/>
    </source>
</evidence>
<evidence type="ECO:0007829" key="5">
    <source>
        <dbReference type="PDB" id="4ORE"/>
    </source>
</evidence>
<evidence type="ECO:0007829" key="6">
    <source>
        <dbReference type="PDB" id="5DBH"/>
    </source>
</evidence>
<evidence type="ECO:0007829" key="7">
    <source>
        <dbReference type="PDB" id="5XCN"/>
    </source>
</evidence>
<evidence type="ECO:0007829" key="8">
    <source>
        <dbReference type="PDB" id="5XCP"/>
    </source>
</evidence>
<evidence type="ECO:0007829" key="9">
    <source>
        <dbReference type="PDB" id="7DJQ"/>
    </source>
</evidence>
<organism>
    <name type="scientific">Haemophilus influenzae (strain ATCC 51907 / DSM 11121 / KW20 / Rd)</name>
    <dbReference type="NCBI Taxonomy" id="71421"/>
    <lineage>
        <taxon>Bacteria</taxon>
        <taxon>Pseudomonadati</taxon>
        <taxon>Pseudomonadota</taxon>
        <taxon>Gammaproteobacteria</taxon>
        <taxon>Pasteurellales</taxon>
        <taxon>Pasteurellaceae</taxon>
        <taxon>Haemophilus</taxon>
    </lineage>
</organism>
<protein>
    <recommendedName>
        <fullName>Cysteine synthase</fullName>
        <shortName>CSase</shortName>
        <ecNumber>2.5.1.47</ecNumber>
    </recommendedName>
    <alternativeName>
        <fullName>O-acetylserine (thiol)-lyase</fullName>
        <shortName>OAS-TL</shortName>
    </alternativeName>
    <alternativeName>
        <fullName>O-acetylserine sulfhydrylase</fullName>
    </alternativeName>
</protein>
<proteinExistence type="evidence at protein level"/>
<sequence>MAIYADNSYSIGNTPLVRLKHFGHNGNVVVKIEGRNPSYSVKCRIGANMVWQAEKDGTLTKGKEIVDATSGNTGIALAYVAAARGYKITLTMPETMSLERKRLLCGLGVNLVLTEGAKGMKGAIAKAEEIVASDPSRYVMLKQFENPANPQIHRETTGPEIWKDTDGKVDVVVAGVGTGGSITGISRAIKLDFGKQITSVAVEPVESPVISQTLAGEEVKPGPHKIQGIGAGFIPKNLDLSIIDRVETVDSDTALATARRLMAEEGILAGISSGAAVAAADRLAKLPEFADKLIVVILPSASERYLSTALFEGIEG</sequence>
<dbReference type="EC" id="2.5.1.47"/>
<dbReference type="EMBL" id="L42023">
    <property type="protein sequence ID" value="AAC22758.1"/>
    <property type="molecule type" value="Genomic_DNA"/>
</dbReference>
<dbReference type="PIR" id="F64182">
    <property type="entry name" value="F64182"/>
</dbReference>
<dbReference type="RefSeq" id="NP_439260.1">
    <property type="nucleotide sequence ID" value="NC_000907.1"/>
</dbReference>
<dbReference type="PDB" id="1Y7L">
    <property type="method" value="X-ray"/>
    <property type="resolution" value="1.55 A"/>
    <property type="chains" value="A=1-316"/>
</dbReference>
<dbReference type="PDB" id="3IQG">
    <property type="method" value="X-ray"/>
    <property type="resolution" value="1.90 A"/>
    <property type="chains" value="X=1-316"/>
</dbReference>
<dbReference type="PDB" id="3IQH">
    <property type="method" value="X-ray"/>
    <property type="resolution" value="1.90 A"/>
    <property type="chains" value="X=1-316"/>
</dbReference>
<dbReference type="PDB" id="3IQI">
    <property type="method" value="X-ray"/>
    <property type="resolution" value="1.70 A"/>
    <property type="chains" value="X=1-316"/>
</dbReference>
<dbReference type="PDB" id="4HO1">
    <property type="method" value="X-ray"/>
    <property type="resolution" value="1.86 A"/>
    <property type="chains" value="X=1-316"/>
</dbReference>
<dbReference type="PDB" id="4LI3">
    <property type="method" value="X-ray"/>
    <property type="resolution" value="2.59 A"/>
    <property type="chains" value="X=1-316"/>
</dbReference>
<dbReference type="PDB" id="4NU8">
    <property type="method" value="X-ray"/>
    <property type="resolution" value="2.07 A"/>
    <property type="chains" value="X=1-316"/>
</dbReference>
<dbReference type="PDB" id="4ORE">
    <property type="method" value="X-ray"/>
    <property type="resolution" value="2.20 A"/>
    <property type="chains" value="X=1-316"/>
</dbReference>
<dbReference type="PDB" id="4ZU1">
    <property type="method" value="X-ray"/>
    <property type="resolution" value="2.20 A"/>
    <property type="chains" value="X=1-316"/>
</dbReference>
<dbReference type="PDB" id="4ZU6">
    <property type="method" value="X-ray"/>
    <property type="resolution" value="2.03 A"/>
    <property type="chains" value="X=1-316"/>
</dbReference>
<dbReference type="PDB" id="5DBE">
    <property type="method" value="X-ray"/>
    <property type="resolution" value="2.25 A"/>
    <property type="chains" value="X=1-316"/>
</dbReference>
<dbReference type="PDB" id="5DBH">
    <property type="method" value="X-ray"/>
    <property type="resolution" value="1.98 A"/>
    <property type="chains" value="X=1-316"/>
</dbReference>
<dbReference type="PDB" id="5XCN">
    <property type="method" value="X-ray"/>
    <property type="resolution" value="1.69 A"/>
    <property type="chains" value="X=1-316"/>
</dbReference>
<dbReference type="PDB" id="5XCP">
    <property type="method" value="X-ray"/>
    <property type="resolution" value="2.04 A"/>
    <property type="chains" value="X=1-316"/>
</dbReference>
<dbReference type="PDB" id="5XCW">
    <property type="method" value="X-ray"/>
    <property type="resolution" value="1.89 A"/>
    <property type="chains" value="X=1-316"/>
</dbReference>
<dbReference type="PDB" id="6AIF">
    <property type="method" value="X-ray"/>
    <property type="resolution" value="2.30 A"/>
    <property type="chains" value="A=1-316"/>
</dbReference>
<dbReference type="PDB" id="7C35">
    <property type="method" value="X-ray"/>
    <property type="resolution" value="2.10 A"/>
    <property type="chains" value="A=1-316"/>
</dbReference>
<dbReference type="PDB" id="7CM8">
    <property type="method" value="X-ray"/>
    <property type="resolution" value="1.90 A"/>
    <property type="chains" value="A=1-316"/>
</dbReference>
<dbReference type="PDB" id="7DJQ">
    <property type="method" value="X-ray"/>
    <property type="resolution" value="2.30 A"/>
    <property type="chains" value="A/B=1-316"/>
</dbReference>
<dbReference type="PDB" id="7EWO">
    <property type="method" value="X-ray"/>
    <property type="resolution" value="2.40 A"/>
    <property type="chains" value="A=1-316"/>
</dbReference>
<dbReference type="PDB" id="7YOD">
    <property type="method" value="X-ray"/>
    <property type="resolution" value="2.10 A"/>
    <property type="chains" value="A=1-316"/>
</dbReference>
<dbReference type="PDB" id="7YOE">
    <property type="method" value="X-ray"/>
    <property type="resolution" value="1.88 A"/>
    <property type="chains" value="A=1-316"/>
</dbReference>
<dbReference type="PDB" id="7YOF">
    <property type="method" value="X-ray"/>
    <property type="resolution" value="2.30 A"/>
    <property type="chains" value="A=1-316"/>
</dbReference>
<dbReference type="PDB" id="7YOG">
    <property type="method" value="X-ray"/>
    <property type="resolution" value="2.30 A"/>
    <property type="chains" value="A=1-316"/>
</dbReference>
<dbReference type="PDB" id="7YOH">
    <property type="method" value="X-ray"/>
    <property type="resolution" value="2.50 A"/>
    <property type="chains" value="A=1-316"/>
</dbReference>
<dbReference type="PDB" id="7YOI">
    <property type="method" value="X-ray"/>
    <property type="resolution" value="2.14 A"/>
    <property type="chains" value="A=1-316"/>
</dbReference>
<dbReference type="PDB" id="7YOK">
    <property type="method" value="X-ray"/>
    <property type="resolution" value="2.80 A"/>
    <property type="chains" value="A=1-316"/>
</dbReference>
<dbReference type="PDB" id="7YOL">
    <property type="method" value="X-ray"/>
    <property type="resolution" value="2.40 A"/>
    <property type="chains" value="A=1-316"/>
</dbReference>
<dbReference type="PDB" id="7YOM">
    <property type="method" value="X-ray"/>
    <property type="resolution" value="2.80 A"/>
    <property type="chains" value="A=1-316"/>
</dbReference>
<dbReference type="PDB" id="8GSK">
    <property type="method" value="X-ray"/>
    <property type="resolution" value="2.27 A"/>
    <property type="chains" value="A=1-316"/>
</dbReference>
<dbReference type="PDBsum" id="1Y7L"/>
<dbReference type="PDBsum" id="3IQG"/>
<dbReference type="PDBsum" id="3IQH"/>
<dbReference type="PDBsum" id="3IQI"/>
<dbReference type="PDBsum" id="4HO1"/>
<dbReference type="PDBsum" id="4LI3"/>
<dbReference type="PDBsum" id="4NU8"/>
<dbReference type="PDBsum" id="4ORE"/>
<dbReference type="PDBsum" id="4ZU1"/>
<dbReference type="PDBsum" id="4ZU6"/>
<dbReference type="PDBsum" id="5DBE"/>
<dbReference type="PDBsum" id="5DBH"/>
<dbReference type="PDBsum" id="5XCN"/>
<dbReference type="PDBsum" id="5XCP"/>
<dbReference type="PDBsum" id="5XCW"/>
<dbReference type="PDBsum" id="6AIF"/>
<dbReference type="PDBsum" id="7C35"/>
<dbReference type="PDBsum" id="7CM8"/>
<dbReference type="PDBsum" id="7DJQ"/>
<dbReference type="PDBsum" id="7EWO"/>
<dbReference type="PDBsum" id="7YOD"/>
<dbReference type="PDBsum" id="7YOE"/>
<dbReference type="PDBsum" id="7YOF"/>
<dbReference type="PDBsum" id="7YOG"/>
<dbReference type="PDBsum" id="7YOH"/>
<dbReference type="PDBsum" id="7YOI"/>
<dbReference type="PDBsum" id="7YOK"/>
<dbReference type="PDBsum" id="7YOL"/>
<dbReference type="PDBsum" id="7YOM"/>
<dbReference type="PDBsum" id="8GSK"/>
<dbReference type="SMR" id="P45040"/>
<dbReference type="STRING" id="71421.HI_1103"/>
<dbReference type="BindingDB" id="P45040"/>
<dbReference type="ChEMBL" id="CHEMBL1075088"/>
<dbReference type="EnsemblBacteria" id="AAC22758">
    <property type="protein sequence ID" value="AAC22758"/>
    <property type="gene ID" value="HI_1103"/>
</dbReference>
<dbReference type="KEGG" id="hin:HI_1103"/>
<dbReference type="PATRIC" id="fig|71421.8.peg.1149"/>
<dbReference type="eggNOG" id="COG0031">
    <property type="taxonomic scope" value="Bacteria"/>
</dbReference>
<dbReference type="HOGENOM" id="CLU_021018_1_0_6"/>
<dbReference type="OrthoDB" id="9805733at2"/>
<dbReference type="PhylomeDB" id="P45040"/>
<dbReference type="BioCyc" id="HINF71421:G1GJ1-1138-MONOMER"/>
<dbReference type="BRENDA" id="2.5.1.47">
    <property type="organism ID" value="2529"/>
</dbReference>
<dbReference type="UniPathway" id="UPA00136">
    <property type="reaction ID" value="UER00200"/>
</dbReference>
<dbReference type="EvolutionaryTrace" id="P45040"/>
<dbReference type="PRO" id="PR:P45040"/>
<dbReference type="Proteomes" id="UP000000579">
    <property type="component" value="Chromosome"/>
</dbReference>
<dbReference type="GO" id="GO:0005737">
    <property type="term" value="C:cytoplasm"/>
    <property type="evidence" value="ECO:0000318"/>
    <property type="project" value="GO_Central"/>
</dbReference>
<dbReference type="GO" id="GO:0004124">
    <property type="term" value="F:cysteine synthase activity"/>
    <property type="evidence" value="ECO:0000318"/>
    <property type="project" value="GO_Central"/>
</dbReference>
<dbReference type="GO" id="GO:0080146">
    <property type="term" value="F:L-cysteine desulfhydrase activity"/>
    <property type="evidence" value="ECO:0000318"/>
    <property type="project" value="GO_Central"/>
</dbReference>
<dbReference type="GO" id="GO:0006535">
    <property type="term" value="P:cysteine biosynthetic process from serine"/>
    <property type="evidence" value="ECO:0000318"/>
    <property type="project" value="GO_Central"/>
</dbReference>
<dbReference type="CDD" id="cd01561">
    <property type="entry name" value="CBS_like"/>
    <property type="match status" value="1"/>
</dbReference>
<dbReference type="FunFam" id="3.40.50.1100:FF:000009">
    <property type="entry name" value="Cysteine synthase"/>
    <property type="match status" value="1"/>
</dbReference>
<dbReference type="Gene3D" id="3.40.50.1100">
    <property type="match status" value="2"/>
</dbReference>
<dbReference type="InterPro" id="IPR005856">
    <property type="entry name" value="Cys_synth"/>
</dbReference>
<dbReference type="InterPro" id="IPR050214">
    <property type="entry name" value="Cys_Synth/Cystath_Beta-Synth"/>
</dbReference>
<dbReference type="InterPro" id="IPR005859">
    <property type="entry name" value="CysK"/>
</dbReference>
<dbReference type="InterPro" id="IPR001216">
    <property type="entry name" value="P-phosphate_BS"/>
</dbReference>
<dbReference type="InterPro" id="IPR001926">
    <property type="entry name" value="TrpB-like_PALP"/>
</dbReference>
<dbReference type="InterPro" id="IPR036052">
    <property type="entry name" value="TrpB-like_PALP_sf"/>
</dbReference>
<dbReference type="NCBIfam" id="TIGR01139">
    <property type="entry name" value="cysK"/>
    <property type="match status" value="1"/>
</dbReference>
<dbReference type="NCBIfam" id="TIGR01136">
    <property type="entry name" value="cysKM"/>
    <property type="match status" value="1"/>
</dbReference>
<dbReference type="PANTHER" id="PTHR10314">
    <property type="entry name" value="CYSTATHIONINE BETA-SYNTHASE"/>
    <property type="match status" value="1"/>
</dbReference>
<dbReference type="Pfam" id="PF00291">
    <property type="entry name" value="PALP"/>
    <property type="match status" value="1"/>
</dbReference>
<dbReference type="SUPFAM" id="SSF53686">
    <property type="entry name" value="Tryptophan synthase beta subunit-like PLP-dependent enzymes"/>
    <property type="match status" value="1"/>
</dbReference>
<dbReference type="PROSITE" id="PS00901">
    <property type="entry name" value="CYS_SYNTHASE"/>
    <property type="match status" value="1"/>
</dbReference>